<accession>Q8U822</accession>
<feature type="chain" id="PRO_0000184981" description="5-oxoprolinase subunit A 2">
    <location>
        <begin position="1"/>
        <end position="255"/>
    </location>
</feature>
<gene>
    <name evidence="1" type="primary">pxpA2</name>
    <name type="ordered locus">Atu4277</name>
    <name type="ORF">AGR_L_1172</name>
</gene>
<proteinExistence type="inferred from homology"/>
<comment type="function">
    <text evidence="1">Catalyzes the cleavage of 5-oxoproline to form L-glutamate coupled to the hydrolysis of ATP to ADP and inorganic phosphate.</text>
</comment>
<comment type="catalytic activity">
    <reaction evidence="1">
        <text>5-oxo-L-proline + ATP + 2 H2O = L-glutamate + ADP + phosphate + H(+)</text>
        <dbReference type="Rhea" id="RHEA:10348"/>
        <dbReference type="ChEBI" id="CHEBI:15377"/>
        <dbReference type="ChEBI" id="CHEBI:15378"/>
        <dbReference type="ChEBI" id="CHEBI:29985"/>
        <dbReference type="ChEBI" id="CHEBI:30616"/>
        <dbReference type="ChEBI" id="CHEBI:43474"/>
        <dbReference type="ChEBI" id="CHEBI:58402"/>
        <dbReference type="ChEBI" id="CHEBI:456216"/>
        <dbReference type="EC" id="3.5.2.9"/>
    </reaction>
</comment>
<comment type="subunit">
    <text evidence="1">Forms a complex composed of PxpA, PxpB and PxpC.</text>
</comment>
<comment type="similarity">
    <text evidence="1">Belongs to the LamB/PxpA family.</text>
</comment>
<organism>
    <name type="scientific">Agrobacterium fabrum (strain C58 / ATCC 33970)</name>
    <name type="common">Agrobacterium tumefaciens (strain C58)</name>
    <dbReference type="NCBI Taxonomy" id="176299"/>
    <lineage>
        <taxon>Bacteria</taxon>
        <taxon>Pseudomonadati</taxon>
        <taxon>Pseudomonadota</taxon>
        <taxon>Alphaproteobacteria</taxon>
        <taxon>Hyphomicrobiales</taxon>
        <taxon>Rhizobiaceae</taxon>
        <taxon>Rhizobium/Agrobacterium group</taxon>
        <taxon>Agrobacterium</taxon>
        <taxon>Agrobacterium tumefaciens complex</taxon>
    </lineage>
</organism>
<keyword id="KW-0067">ATP-binding</keyword>
<keyword id="KW-0378">Hydrolase</keyword>
<keyword id="KW-0547">Nucleotide-binding</keyword>
<keyword id="KW-1185">Reference proteome</keyword>
<protein>
    <recommendedName>
        <fullName evidence="1">5-oxoprolinase subunit A 2</fullName>
        <shortName evidence="1">5-OPase subunit A 2</shortName>
        <ecNumber evidence="1">3.5.2.9</ecNumber>
    </recommendedName>
    <alternativeName>
        <fullName evidence="1">5-oxoprolinase (ATP-hydrolyzing) subunit A 2</fullName>
    </alternativeName>
</protein>
<sequence>MKIDLNSDMGEGFGPYRLCDDEAMMKIVSSANIACGFHGGDPDTMARMVRLAKANGVGIGAHPGLPDRAGFGRREIPFQPDELRQQMLYQLGALMAIAGAEGMKVGHFSFHAAMGNMVNRDPVLADLMMNAIATVDPRLVVFVTPESEIERAAKRAGLKTLALFLADRAYDAEGRLVARGLPGALVKDETSVRARVRRFLTHGQVEAIDGTIIAMPAHSILVHSDTPGSLELARIIRSEIEASGATLAPAAEHAA</sequence>
<evidence type="ECO:0000255" key="1">
    <source>
        <dbReference type="HAMAP-Rule" id="MF_00691"/>
    </source>
</evidence>
<dbReference type="EC" id="3.5.2.9" evidence="1"/>
<dbReference type="EMBL" id="AE007870">
    <property type="protein sequence ID" value="AAK89161.2"/>
    <property type="molecule type" value="Genomic_DNA"/>
</dbReference>
<dbReference type="PIR" id="AI3081">
    <property type="entry name" value="AI3081"/>
</dbReference>
<dbReference type="PIR" id="G98204">
    <property type="entry name" value="G98204"/>
</dbReference>
<dbReference type="RefSeq" id="NP_356376.2">
    <property type="nucleotide sequence ID" value="NC_003063.2"/>
</dbReference>
<dbReference type="RefSeq" id="WP_010973706.1">
    <property type="nucleotide sequence ID" value="NC_003063.2"/>
</dbReference>
<dbReference type="SMR" id="Q8U822"/>
<dbReference type="STRING" id="176299.Atu4277"/>
<dbReference type="EnsemblBacteria" id="AAK89161">
    <property type="protein sequence ID" value="AAK89161"/>
    <property type="gene ID" value="Atu4277"/>
</dbReference>
<dbReference type="GeneID" id="1136151"/>
<dbReference type="KEGG" id="atu:Atu4277"/>
<dbReference type="PATRIC" id="fig|176299.10.peg.4085"/>
<dbReference type="eggNOG" id="COG1540">
    <property type="taxonomic scope" value="Bacteria"/>
</dbReference>
<dbReference type="HOGENOM" id="CLU_069535_0_0_5"/>
<dbReference type="OrthoDB" id="9773478at2"/>
<dbReference type="PhylomeDB" id="Q8U822"/>
<dbReference type="Proteomes" id="UP000000813">
    <property type="component" value="Chromosome linear"/>
</dbReference>
<dbReference type="GO" id="GO:0017168">
    <property type="term" value="F:5-oxoprolinase (ATP-hydrolyzing) activity"/>
    <property type="evidence" value="ECO:0007669"/>
    <property type="project" value="UniProtKB-UniRule"/>
</dbReference>
<dbReference type="GO" id="GO:0005524">
    <property type="term" value="F:ATP binding"/>
    <property type="evidence" value="ECO:0007669"/>
    <property type="project" value="UniProtKB-UniRule"/>
</dbReference>
<dbReference type="GO" id="GO:0005975">
    <property type="term" value="P:carbohydrate metabolic process"/>
    <property type="evidence" value="ECO:0007669"/>
    <property type="project" value="InterPro"/>
</dbReference>
<dbReference type="CDD" id="cd10787">
    <property type="entry name" value="LamB_YcsF_like"/>
    <property type="match status" value="1"/>
</dbReference>
<dbReference type="Gene3D" id="3.20.20.370">
    <property type="entry name" value="Glycoside hydrolase/deacetylase"/>
    <property type="match status" value="1"/>
</dbReference>
<dbReference type="HAMAP" id="MF_00691">
    <property type="entry name" value="PxpA"/>
    <property type="match status" value="1"/>
</dbReference>
<dbReference type="InterPro" id="IPR011330">
    <property type="entry name" value="Glyco_hydro/deAcase_b/a-brl"/>
</dbReference>
<dbReference type="InterPro" id="IPR005501">
    <property type="entry name" value="LamB/YcsF/PxpA-like"/>
</dbReference>
<dbReference type="NCBIfam" id="NF003814">
    <property type="entry name" value="PRK05406.1-3"/>
    <property type="match status" value="1"/>
</dbReference>
<dbReference type="NCBIfam" id="NF003816">
    <property type="entry name" value="PRK05406.1-5"/>
    <property type="match status" value="1"/>
</dbReference>
<dbReference type="PANTHER" id="PTHR30292:SF0">
    <property type="entry name" value="5-OXOPROLINASE SUBUNIT A"/>
    <property type="match status" value="1"/>
</dbReference>
<dbReference type="PANTHER" id="PTHR30292">
    <property type="entry name" value="UNCHARACTERIZED PROTEIN YBGL-RELATED"/>
    <property type="match status" value="1"/>
</dbReference>
<dbReference type="Pfam" id="PF03746">
    <property type="entry name" value="LamB_YcsF"/>
    <property type="match status" value="1"/>
</dbReference>
<dbReference type="SUPFAM" id="SSF88713">
    <property type="entry name" value="Glycoside hydrolase/deacetylase"/>
    <property type="match status" value="1"/>
</dbReference>
<reference key="1">
    <citation type="journal article" date="2001" name="Science">
        <title>The genome of the natural genetic engineer Agrobacterium tumefaciens C58.</title>
        <authorList>
            <person name="Wood D.W."/>
            <person name="Setubal J.C."/>
            <person name="Kaul R."/>
            <person name="Monks D.E."/>
            <person name="Kitajima J.P."/>
            <person name="Okura V.K."/>
            <person name="Zhou Y."/>
            <person name="Chen L."/>
            <person name="Wood G.E."/>
            <person name="Almeida N.F. Jr."/>
            <person name="Woo L."/>
            <person name="Chen Y."/>
            <person name="Paulsen I.T."/>
            <person name="Eisen J.A."/>
            <person name="Karp P.D."/>
            <person name="Bovee D. Sr."/>
            <person name="Chapman P."/>
            <person name="Clendenning J."/>
            <person name="Deatherage G."/>
            <person name="Gillet W."/>
            <person name="Grant C."/>
            <person name="Kutyavin T."/>
            <person name="Levy R."/>
            <person name="Li M.-J."/>
            <person name="McClelland E."/>
            <person name="Palmieri A."/>
            <person name="Raymond C."/>
            <person name="Rouse G."/>
            <person name="Saenphimmachak C."/>
            <person name="Wu Z."/>
            <person name="Romero P."/>
            <person name="Gordon D."/>
            <person name="Zhang S."/>
            <person name="Yoo H."/>
            <person name="Tao Y."/>
            <person name="Biddle P."/>
            <person name="Jung M."/>
            <person name="Krespan W."/>
            <person name="Perry M."/>
            <person name="Gordon-Kamm B."/>
            <person name="Liao L."/>
            <person name="Kim S."/>
            <person name="Hendrick C."/>
            <person name="Zhao Z.-Y."/>
            <person name="Dolan M."/>
            <person name="Chumley F."/>
            <person name="Tingey S.V."/>
            <person name="Tomb J.-F."/>
            <person name="Gordon M.P."/>
            <person name="Olson M.V."/>
            <person name="Nester E.W."/>
        </authorList>
    </citation>
    <scope>NUCLEOTIDE SEQUENCE [LARGE SCALE GENOMIC DNA]</scope>
    <source>
        <strain>C58 / ATCC 33970</strain>
    </source>
</reference>
<reference key="2">
    <citation type="journal article" date="2001" name="Science">
        <title>Genome sequence of the plant pathogen and biotechnology agent Agrobacterium tumefaciens C58.</title>
        <authorList>
            <person name="Goodner B."/>
            <person name="Hinkle G."/>
            <person name="Gattung S."/>
            <person name="Miller N."/>
            <person name="Blanchard M."/>
            <person name="Qurollo B."/>
            <person name="Goldman B.S."/>
            <person name="Cao Y."/>
            <person name="Askenazi M."/>
            <person name="Halling C."/>
            <person name="Mullin L."/>
            <person name="Houmiel K."/>
            <person name="Gordon J."/>
            <person name="Vaudin M."/>
            <person name="Iartchouk O."/>
            <person name="Epp A."/>
            <person name="Liu F."/>
            <person name="Wollam C."/>
            <person name="Allinger M."/>
            <person name="Doughty D."/>
            <person name="Scott C."/>
            <person name="Lappas C."/>
            <person name="Markelz B."/>
            <person name="Flanagan C."/>
            <person name="Crowell C."/>
            <person name="Gurson J."/>
            <person name="Lomo C."/>
            <person name="Sear C."/>
            <person name="Strub G."/>
            <person name="Cielo C."/>
            <person name="Slater S."/>
        </authorList>
    </citation>
    <scope>NUCLEOTIDE SEQUENCE [LARGE SCALE GENOMIC DNA]</scope>
    <source>
        <strain>C58 / ATCC 33970</strain>
    </source>
</reference>
<name>PXPA2_AGRFC</name>